<dbReference type="EMBL" id="BX571868">
    <property type="protein sequence ID" value="CAE15148.1"/>
    <property type="molecule type" value="Genomic_DNA"/>
</dbReference>
<dbReference type="RefSeq" id="WP_011146994.1">
    <property type="nucleotide sequence ID" value="NC_005126.1"/>
</dbReference>
<dbReference type="SMR" id="Q7N3E3"/>
<dbReference type="STRING" id="243265.plu2774"/>
<dbReference type="GeneID" id="48849037"/>
<dbReference type="KEGG" id="plu:plu2774"/>
<dbReference type="eggNOG" id="COG0845">
    <property type="taxonomic scope" value="Bacteria"/>
</dbReference>
<dbReference type="HOGENOM" id="CLU_018816_2_0_6"/>
<dbReference type="OrthoDB" id="9783047at2"/>
<dbReference type="Proteomes" id="UP000002514">
    <property type="component" value="Chromosome"/>
</dbReference>
<dbReference type="GO" id="GO:1990281">
    <property type="term" value="C:efflux pump complex"/>
    <property type="evidence" value="ECO:0007669"/>
    <property type="project" value="TreeGrafter"/>
</dbReference>
<dbReference type="GO" id="GO:0005886">
    <property type="term" value="C:plasma membrane"/>
    <property type="evidence" value="ECO:0007669"/>
    <property type="project" value="UniProtKB-SubCell"/>
</dbReference>
<dbReference type="GO" id="GO:0015562">
    <property type="term" value="F:efflux transmembrane transporter activity"/>
    <property type="evidence" value="ECO:0007669"/>
    <property type="project" value="TreeGrafter"/>
</dbReference>
<dbReference type="GO" id="GO:0009636">
    <property type="term" value="P:response to toxic substance"/>
    <property type="evidence" value="ECO:0007669"/>
    <property type="project" value="UniProtKB-ARBA"/>
</dbReference>
<dbReference type="FunFam" id="2.40.420.20:FF:000001">
    <property type="entry name" value="Efflux RND transporter periplasmic adaptor subunit"/>
    <property type="match status" value="1"/>
</dbReference>
<dbReference type="FunFam" id="2.40.30.170:FF:000006">
    <property type="entry name" value="Multidrug resistance protein MdtA"/>
    <property type="match status" value="1"/>
</dbReference>
<dbReference type="Gene3D" id="2.40.30.170">
    <property type="match status" value="1"/>
</dbReference>
<dbReference type="Gene3D" id="2.40.420.20">
    <property type="match status" value="1"/>
</dbReference>
<dbReference type="Gene3D" id="2.40.50.100">
    <property type="match status" value="1"/>
</dbReference>
<dbReference type="Gene3D" id="1.10.287.470">
    <property type="entry name" value="Helix hairpin bin"/>
    <property type="match status" value="1"/>
</dbReference>
<dbReference type="HAMAP" id="MF_01422">
    <property type="entry name" value="MdtA"/>
    <property type="match status" value="1"/>
</dbReference>
<dbReference type="InterPro" id="IPR032317">
    <property type="entry name" value="CusB_D23"/>
</dbReference>
<dbReference type="InterPro" id="IPR022824">
    <property type="entry name" value="Multidrug-R_MdtA"/>
</dbReference>
<dbReference type="InterPro" id="IPR006143">
    <property type="entry name" value="RND_pump_MFP"/>
</dbReference>
<dbReference type="NCBIfam" id="NF008589">
    <property type="entry name" value="PRK11556.1"/>
    <property type="match status" value="1"/>
</dbReference>
<dbReference type="NCBIfam" id="TIGR01730">
    <property type="entry name" value="RND_mfp"/>
    <property type="match status" value="1"/>
</dbReference>
<dbReference type="PANTHER" id="PTHR30469">
    <property type="entry name" value="MULTIDRUG RESISTANCE PROTEIN MDTA"/>
    <property type="match status" value="1"/>
</dbReference>
<dbReference type="PANTHER" id="PTHR30469:SF12">
    <property type="entry name" value="MULTIDRUG RESISTANCE PROTEIN MDTA"/>
    <property type="match status" value="1"/>
</dbReference>
<dbReference type="Pfam" id="PF16576">
    <property type="entry name" value="HlyD_D23"/>
    <property type="match status" value="1"/>
</dbReference>
<dbReference type="SUPFAM" id="SSF111369">
    <property type="entry name" value="HlyD-like secretion proteins"/>
    <property type="match status" value="1"/>
</dbReference>
<comment type="subunit">
    <text evidence="1">Part of a tripartite efflux system composed of MdtA, MdtB and MdtC.</text>
</comment>
<comment type="subcellular location">
    <subcellularLocation>
        <location evidence="1">Cell inner membrane</location>
        <topology evidence="1">Peripheral membrane protein</topology>
    </subcellularLocation>
</comment>
<comment type="similarity">
    <text evidence="1">Belongs to the membrane fusion protein (MFP) (TC 8.A.1) family.</text>
</comment>
<feature type="signal peptide" evidence="1">
    <location>
        <begin position="1"/>
        <end position="20"/>
    </location>
</feature>
<feature type="chain" id="PRO_0000018703" description="Multidrug resistance protein MdtA">
    <location>
        <begin position="21"/>
        <end position="401"/>
    </location>
</feature>
<keyword id="KW-0997">Cell inner membrane</keyword>
<keyword id="KW-1003">Cell membrane</keyword>
<keyword id="KW-0472">Membrane</keyword>
<keyword id="KW-1185">Reference proteome</keyword>
<keyword id="KW-0732">Signal</keyword>
<keyword id="KW-0813">Transport</keyword>
<accession>Q7N3E3</accession>
<protein>
    <recommendedName>
        <fullName evidence="1">Multidrug resistance protein MdtA</fullName>
    </recommendedName>
    <alternativeName>
        <fullName evidence="1">Multidrug transporter MdtA</fullName>
    </alternativeName>
</protein>
<evidence type="ECO:0000255" key="1">
    <source>
        <dbReference type="HAMAP-Rule" id="MF_01422"/>
    </source>
</evidence>
<name>MDTA_PHOLL</name>
<proteinExistence type="inferred from homology"/>
<organism>
    <name type="scientific">Photorhabdus laumondii subsp. laumondii (strain DSM 15139 / CIP 105565 / TT01)</name>
    <name type="common">Photorhabdus luminescens subsp. laumondii</name>
    <dbReference type="NCBI Taxonomy" id="243265"/>
    <lineage>
        <taxon>Bacteria</taxon>
        <taxon>Pseudomonadati</taxon>
        <taxon>Pseudomonadota</taxon>
        <taxon>Gammaproteobacteria</taxon>
        <taxon>Enterobacterales</taxon>
        <taxon>Morganellaceae</taxon>
        <taxon>Photorhabdus</taxon>
    </lineage>
</organism>
<sequence length="401" mass="43759">MNQNNKHRTLLFRAALAAIAIAAAIFFWYQLKTPQQSSPSDQSSGLRHSPLPPVQVATAKEQAVPRFLAGLGTIQAANTATVTSRVEGQLIALHFQEGQQIKQGDLLAEIDPRPFQVQLAQAKGQLAKDEAILANARQDLNRYQKLANTHLISQQEMDNQRALVRQHEASLKVDQAAIDSAKLQLTYSRITAPISGKVGLKQIDVGNFISSGNSSSIVVITQTDPVDVLFSLPENDINAVLQAQKTNHDVVVSAWDRNNQQQLAAGKLLSIDNQIDATTGTIKLKARFSNQESILFPNQFVNVRIKVDTLENAVVIPNAALQMGNEGNFVWMLGKENKVSKHLVTVKLQDTKRVVISAGLAAGDKVVTDGIDRLTDGAKVDIVTPMVNKPQPQKHDQTENS</sequence>
<gene>
    <name evidence="1" type="primary">mdtA</name>
    <name type="ordered locus">plu2774</name>
</gene>
<reference key="1">
    <citation type="journal article" date="2003" name="Nat. Biotechnol.">
        <title>The genome sequence of the entomopathogenic bacterium Photorhabdus luminescens.</title>
        <authorList>
            <person name="Duchaud E."/>
            <person name="Rusniok C."/>
            <person name="Frangeul L."/>
            <person name="Buchrieser C."/>
            <person name="Givaudan A."/>
            <person name="Taourit S."/>
            <person name="Bocs S."/>
            <person name="Boursaux-Eude C."/>
            <person name="Chandler M."/>
            <person name="Charles J.-F."/>
            <person name="Dassa E."/>
            <person name="Derose R."/>
            <person name="Derzelle S."/>
            <person name="Freyssinet G."/>
            <person name="Gaudriault S."/>
            <person name="Medigue C."/>
            <person name="Lanois A."/>
            <person name="Powell K."/>
            <person name="Siguier P."/>
            <person name="Vincent R."/>
            <person name="Wingate V."/>
            <person name="Zouine M."/>
            <person name="Glaser P."/>
            <person name="Boemare N."/>
            <person name="Danchin A."/>
            <person name="Kunst F."/>
        </authorList>
    </citation>
    <scope>NUCLEOTIDE SEQUENCE [LARGE SCALE GENOMIC DNA]</scope>
    <source>
        <strain>DSM 15139 / CIP 105565 / TT01</strain>
    </source>
</reference>